<reference key="1">
    <citation type="journal article" date="2007" name="J. Bacteriol.">
        <title>The complete genome sequence of Campylobacter jejuni strain 81116 (NCTC11828).</title>
        <authorList>
            <person name="Pearson B.M."/>
            <person name="Gaskin D.J.H."/>
            <person name="Segers R.P.A.M."/>
            <person name="Wells J.M."/>
            <person name="Nuijten P.J.M."/>
            <person name="van Vliet A.H.M."/>
        </authorList>
    </citation>
    <scope>NUCLEOTIDE SEQUENCE [LARGE SCALE GENOMIC DNA]</scope>
    <source>
        <strain>81116 / NCTC 11828</strain>
    </source>
</reference>
<keyword id="KW-0004">4Fe-4S</keyword>
<keyword id="KW-0963">Cytoplasm</keyword>
<keyword id="KW-0408">Iron</keyword>
<keyword id="KW-0411">Iron-sulfur</keyword>
<keyword id="KW-0479">Metal-binding</keyword>
<keyword id="KW-0949">S-adenosyl-L-methionine</keyword>
<keyword id="KW-0808">Transferase</keyword>
<accession>A8FNC1</accession>
<feature type="chain" id="PRO_0000374757" description="Ribosomal protein uS12 methylthiotransferase RimO">
    <location>
        <begin position="1"/>
        <end position="439"/>
    </location>
</feature>
<feature type="domain" description="MTTase N-terminal" evidence="1">
    <location>
        <begin position="2"/>
        <end position="114"/>
    </location>
</feature>
<feature type="domain" description="Radical SAM core" evidence="2">
    <location>
        <begin position="132"/>
        <end position="363"/>
    </location>
</feature>
<feature type="binding site" evidence="1">
    <location>
        <position position="11"/>
    </location>
    <ligand>
        <name>[4Fe-4S] cluster</name>
        <dbReference type="ChEBI" id="CHEBI:49883"/>
        <label>1</label>
    </ligand>
</feature>
<feature type="binding site" evidence="1">
    <location>
        <position position="45"/>
    </location>
    <ligand>
        <name>[4Fe-4S] cluster</name>
        <dbReference type="ChEBI" id="CHEBI:49883"/>
        <label>1</label>
    </ligand>
</feature>
<feature type="binding site" evidence="1">
    <location>
        <position position="77"/>
    </location>
    <ligand>
        <name>[4Fe-4S] cluster</name>
        <dbReference type="ChEBI" id="CHEBI:49883"/>
        <label>1</label>
    </ligand>
</feature>
<feature type="binding site" evidence="1">
    <location>
        <position position="146"/>
    </location>
    <ligand>
        <name>[4Fe-4S] cluster</name>
        <dbReference type="ChEBI" id="CHEBI:49883"/>
        <label>2</label>
        <note>4Fe-4S-S-AdoMet</note>
    </ligand>
</feature>
<feature type="binding site" evidence="1">
    <location>
        <position position="150"/>
    </location>
    <ligand>
        <name>[4Fe-4S] cluster</name>
        <dbReference type="ChEBI" id="CHEBI:49883"/>
        <label>2</label>
        <note>4Fe-4S-S-AdoMet</note>
    </ligand>
</feature>
<feature type="binding site" evidence="1">
    <location>
        <position position="153"/>
    </location>
    <ligand>
        <name>[4Fe-4S] cluster</name>
        <dbReference type="ChEBI" id="CHEBI:49883"/>
        <label>2</label>
        <note>4Fe-4S-S-AdoMet</note>
    </ligand>
</feature>
<dbReference type="EC" id="2.8.4.4" evidence="1"/>
<dbReference type="EMBL" id="CP000814">
    <property type="protein sequence ID" value="ABV52958.1"/>
    <property type="molecule type" value="Genomic_DNA"/>
</dbReference>
<dbReference type="RefSeq" id="WP_012006779.1">
    <property type="nucleotide sequence ID" value="NC_009839.1"/>
</dbReference>
<dbReference type="SMR" id="A8FNC1"/>
<dbReference type="KEGG" id="cju:C8J_1360"/>
<dbReference type="HOGENOM" id="CLU_018697_0_1_7"/>
<dbReference type="GO" id="GO:0005829">
    <property type="term" value="C:cytosol"/>
    <property type="evidence" value="ECO:0007669"/>
    <property type="project" value="TreeGrafter"/>
</dbReference>
<dbReference type="GO" id="GO:0051539">
    <property type="term" value="F:4 iron, 4 sulfur cluster binding"/>
    <property type="evidence" value="ECO:0007669"/>
    <property type="project" value="UniProtKB-UniRule"/>
</dbReference>
<dbReference type="GO" id="GO:0035599">
    <property type="term" value="F:aspartic acid methylthiotransferase activity"/>
    <property type="evidence" value="ECO:0007669"/>
    <property type="project" value="TreeGrafter"/>
</dbReference>
<dbReference type="GO" id="GO:0046872">
    <property type="term" value="F:metal ion binding"/>
    <property type="evidence" value="ECO:0007669"/>
    <property type="project" value="UniProtKB-KW"/>
</dbReference>
<dbReference type="GO" id="GO:0103039">
    <property type="term" value="F:protein methylthiotransferase activity"/>
    <property type="evidence" value="ECO:0007669"/>
    <property type="project" value="UniProtKB-EC"/>
</dbReference>
<dbReference type="GO" id="GO:0006400">
    <property type="term" value="P:tRNA modification"/>
    <property type="evidence" value="ECO:0007669"/>
    <property type="project" value="InterPro"/>
</dbReference>
<dbReference type="CDD" id="cd01335">
    <property type="entry name" value="Radical_SAM"/>
    <property type="match status" value="1"/>
</dbReference>
<dbReference type="Gene3D" id="3.40.50.12160">
    <property type="entry name" value="Methylthiotransferase, N-terminal domain"/>
    <property type="match status" value="1"/>
</dbReference>
<dbReference type="Gene3D" id="3.80.30.20">
    <property type="entry name" value="tm_1862 like domain"/>
    <property type="match status" value="1"/>
</dbReference>
<dbReference type="HAMAP" id="MF_01865">
    <property type="entry name" value="MTTase_RimO"/>
    <property type="match status" value="1"/>
</dbReference>
<dbReference type="InterPro" id="IPR006638">
    <property type="entry name" value="Elp3/MiaA/NifB-like_rSAM"/>
</dbReference>
<dbReference type="InterPro" id="IPR005839">
    <property type="entry name" value="Methylthiotransferase"/>
</dbReference>
<dbReference type="InterPro" id="IPR020612">
    <property type="entry name" value="Methylthiotransferase_CS"/>
</dbReference>
<dbReference type="InterPro" id="IPR013848">
    <property type="entry name" value="Methylthiotransferase_N"/>
</dbReference>
<dbReference type="InterPro" id="IPR038135">
    <property type="entry name" value="Methylthiotransferase_N_sf"/>
</dbReference>
<dbReference type="InterPro" id="IPR005840">
    <property type="entry name" value="Ribosomal_uS12_MeSTrfase_RimO"/>
</dbReference>
<dbReference type="InterPro" id="IPR007197">
    <property type="entry name" value="rSAM"/>
</dbReference>
<dbReference type="InterPro" id="IPR023404">
    <property type="entry name" value="rSAM_horseshoe"/>
</dbReference>
<dbReference type="NCBIfam" id="TIGR01125">
    <property type="entry name" value="30S ribosomal protein S12 methylthiotransferase RimO"/>
    <property type="match status" value="1"/>
</dbReference>
<dbReference type="NCBIfam" id="TIGR00089">
    <property type="entry name" value="MiaB/RimO family radical SAM methylthiotransferase"/>
    <property type="match status" value="1"/>
</dbReference>
<dbReference type="PANTHER" id="PTHR43837">
    <property type="entry name" value="RIBOSOMAL PROTEIN S12 METHYLTHIOTRANSFERASE RIMO"/>
    <property type="match status" value="1"/>
</dbReference>
<dbReference type="PANTHER" id="PTHR43837:SF1">
    <property type="entry name" value="RIBOSOMAL PROTEIN US12 METHYLTHIOTRANSFERASE RIMO"/>
    <property type="match status" value="1"/>
</dbReference>
<dbReference type="Pfam" id="PF04055">
    <property type="entry name" value="Radical_SAM"/>
    <property type="match status" value="1"/>
</dbReference>
<dbReference type="Pfam" id="PF00919">
    <property type="entry name" value="UPF0004"/>
    <property type="match status" value="1"/>
</dbReference>
<dbReference type="SFLD" id="SFLDG01082">
    <property type="entry name" value="B12-binding_domain_containing"/>
    <property type="match status" value="1"/>
</dbReference>
<dbReference type="SFLD" id="SFLDG01061">
    <property type="entry name" value="methylthiotransferase"/>
    <property type="match status" value="1"/>
</dbReference>
<dbReference type="SFLD" id="SFLDF00274">
    <property type="entry name" value="ribosomal_protein_S12_methylth"/>
    <property type="match status" value="1"/>
</dbReference>
<dbReference type="SMART" id="SM00729">
    <property type="entry name" value="Elp3"/>
    <property type="match status" value="1"/>
</dbReference>
<dbReference type="SUPFAM" id="SSF102114">
    <property type="entry name" value="Radical SAM enzymes"/>
    <property type="match status" value="1"/>
</dbReference>
<dbReference type="PROSITE" id="PS51449">
    <property type="entry name" value="MTTASE_N"/>
    <property type="match status" value="1"/>
</dbReference>
<dbReference type="PROSITE" id="PS01278">
    <property type="entry name" value="MTTASE_RADICAL"/>
    <property type="match status" value="1"/>
</dbReference>
<dbReference type="PROSITE" id="PS51918">
    <property type="entry name" value="RADICAL_SAM"/>
    <property type="match status" value="1"/>
</dbReference>
<evidence type="ECO:0000255" key="1">
    <source>
        <dbReference type="HAMAP-Rule" id="MF_01865"/>
    </source>
</evidence>
<evidence type="ECO:0000255" key="2">
    <source>
        <dbReference type="PROSITE-ProRule" id="PRU01266"/>
    </source>
</evidence>
<comment type="function">
    <text evidence="1">Catalyzes the methylthiolation of an aspartic acid residue of ribosomal protein uS12.</text>
</comment>
<comment type="catalytic activity">
    <reaction evidence="1">
        <text>L-aspartate(89)-[ribosomal protein uS12]-hydrogen + (sulfur carrier)-SH + AH2 + 2 S-adenosyl-L-methionine = 3-methylsulfanyl-L-aspartate(89)-[ribosomal protein uS12]-hydrogen + (sulfur carrier)-H + 5'-deoxyadenosine + L-methionine + A + S-adenosyl-L-homocysteine + 2 H(+)</text>
        <dbReference type="Rhea" id="RHEA:37087"/>
        <dbReference type="Rhea" id="RHEA-COMP:10460"/>
        <dbReference type="Rhea" id="RHEA-COMP:10461"/>
        <dbReference type="Rhea" id="RHEA-COMP:14737"/>
        <dbReference type="Rhea" id="RHEA-COMP:14739"/>
        <dbReference type="ChEBI" id="CHEBI:13193"/>
        <dbReference type="ChEBI" id="CHEBI:15378"/>
        <dbReference type="ChEBI" id="CHEBI:17319"/>
        <dbReference type="ChEBI" id="CHEBI:17499"/>
        <dbReference type="ChEBI" id="CHEBI:29917"/>
        <dbReference type="ChEBI" id="CHEBI:29961"/>
        <dbReference type="ChEBI" id="CHEBI:57844"/>
        <dbReference type="ChEBI" id="CHEBI:57856"/>
        <dbReference type="ChEBI" id="CHEBI:59789"/>
        <dbReference type="ChEBI" id="CHEBI:64428"/>
        <dbReference type="ChEBI" id="CHEBI:73599"/>
        <dbReference type="EC" id="2.8.4.4"/>
    </reaction>
</comment>
<comment type="cofactor">
    <cofactor evidence="1">
        <name>[4Fe-4S] cluster</name>
        <dbReference type="ChEBI" id="CHEBI:49883"/>
    </cofactor>
    <text evidence="1">Binds 2 [4Fe-4S] clusters. One cluster is coordinated with 3 cysteines and an exchangeable S-adenosyl-L-methionine.</text>
</comment>
<comment type="subcellular location">
    <subcellularLocation>
        <location evidence="1">Cytoplasm</location>
    </subcellularLocation>
</comment>
<comment type="similarity">
    <text evidence="1">Belongs to the methylthiotransferase family. RimO subfamily.</text>
</comment>
<gene>
    <name evidence="1" type="primary">rimO</name>
    <name type="ordered locus">C8J_1360</name>
</gene>
<sequence length="439" mass="49880">MSKLYLMSLGCNKNLVDSEIMLGRLSAYELCDEPSKADVLIVNTCGFIDSAKKESINAILDLHEQRKKDSLLVVTGCLMQRYREELMKELPEVDLFTGVGDYERIDEMILKKTNLFSNSTYLQSENSKRIITGSNSHAFIKIAEGCNQKCSFCAIPSFKGKLKSREISSIIAELKDLVARGYKDFSFIAQDTSSYLFDKGEKDGLIRLIDEVEKIKGIRAARILYLYPTSASEALIKRIIASEIFINYFDMPLQHISDNMLKIMKRGANSTRLKEMLNLMKSAPNSFLRTGFIVGHPGESEADFEELCEFVKDFGFDRISVFAYSKEEDTAAFDMEQVPFKVINKRLKIIEKIVDEVIEKSFEKEVGQKRLVVCTGKSSEGEFFIAAKDLRWDREIDGEILINESECGNLEMGQIYECEILQNLDKKLLAKALRKVDAN</sequence>
<name>RIMO_CAMJ8</name>
<proteinExistence type="inferred from homology"/>
<protein>
    <recommendedName>
        <fullName evidence="1">Ribosomal protein uS12 methylthiotransferase RimO</fullName>
        <shortName evidence="1">uS12 MTTase</shortName>
        <shortName evidence="1">uS12 methylthiotransferase</shortName>
        <ecNumber evidence="1">2.8.4.4</ecNumber>
    </recommendedName>
    <alternativeName>
        <fullName evidence="1">Ribosomal protein uS12 (aspartate-C(3))-methylthiotransferase</fullName>
    </alternativeName>
    <alternativeName>
        <fullName evidence="1">Ribosome maturation factor RimO</fullName>
    </alternativeName>
</protein>
<organism>
    <name type="scientific">Campylobacter jejuni subsp. jejuni serotype O:6 (strain 81116 / NCTC 11828)</name>
    <dbReference type="NCBI Taxonomy" id="407148"/>
    <lineage>
        <taxon>Bacteria</taxon>
        <taxon>Pseudomonadati</taxon>
        <taxon>Campylobacterota</taxon>
        <taxon>Epsilonproteobacteria</taxon>
        <taxon>Campylobacterales</taxon>
        <taxon>Campylobacteraceae</taxon>
        <taxon>Campylobacter</taxon>
    </lineage>
</organism>